<dbReference type="EC" id="2.5.1.145" evidence="1"/>
<dbReference type="EMBL" id="AE006470">
    <property type="protein sequence ID" value="AAM72323.1"/>
    <property type="molecule type" value="Genomic_DNA"/>
</dbReference>
<dbReference type="RefSeq" id="NP_661981.1">
    <property type="nucleotide sequence ID" value="NC_002932.3"/>
</dbReference>
<dbReference type="RefSeq" id="WP_010932768.1">
    <property type="nucleotide sequence ID" value="NC_002932.3"/>
</dbReference>
<dbReference type="SMR" id="Q8KDG0"/>
<dbReference type="STRING" id="194439.CT1090"/>
<dbReference type="EnsemblBacteria" id="AAM72323">
    <property type="protein sequence ID" value="AAM72323"/>
    <property type="gene ID" value="CT1090"/>
</dbReference>
<dbReference type="KEGG" id="cte:CT1090"/>
<dbReference type="PATRIC" id="fig|194439.7.peg.994"/>
<dbReference type="eggNOG" id="COG0682">
    <property type="taxonomic scope" value="Bacteria"/>
</dbReference>
<dbReference type="HOGENOM" id="CLU_013386_1_0_10"/>
<dbReference type="OrthoDB" id="871140at2"/>
<dbReference type="UniPathway" id="UPA00664"/>
<dbReference type="Proteomes" id="UP000001007">
    <property type="component" value="Chromosome"/>
</dbReference>
<dbReference type="GO" id="GO:0005886">
    <property type="term" value="C:plasma membrane"/>
    <property type="evidence" value="ECO:0007669"/>
    <property type="project" value="UniProtKB-SubCell"/>
</dbReference>
<dbReference type="GO" id="GO:0008961">
    <property type="term" value="F:phosphatidylglycerol-prolipoprotein diacylglyceryl transferase activity"/>
    <property type="evidence" value="ECO:0007669"/>
    <property type="project" value="UniProtKB-UniRule"/>
</dbReference>
<dbReference type="GO" id="GO:0042158">
    <property type="term" value="P:lipoprotein biosynthetic process"/>
    <property type="evidence" value="ECO:0007669"/>
    <property type="project" value="UniProtKB-UniRule"/>
</dbReference>
<dbReference type="HAMAP" id="MF_01147">
    <property type="entry name" value="Lgt"/>
    <property type="match status" value="1"/>
</dbReference>
<dbReference type="InterPro" id="IPR001640">
    <property type="entry name" value="Lgt"/>
</dbReference>
<dbReference type="NCBIfam" id="TIGR00544">
    <property type="entry name" value="lgt"/>
    <property type="match status" value="1"/>
</dbReference>
<dbReference type="PANTHER" id="PTHR30589:SF0">
    <property type="entry name" value="PHOSPHATIDYLGLYCEROL--PROLIPOPROTEIN DIACYLGLYCERYL TRANSFERASE"/>
    <property type="match status" value="1"/>
</dbReference>
<dbReference type="PANTHER" id="PTHR30589">
    <property type="entry name" value="PROLIPOPROTEIN DIACYLGLYCERYL TRANSFERASE"/>
    <property type="match status" value="1"/>
</dbReference>
<dbReference type="Pfam" id="PF01790">
    <property type="entry name" value="LGT"/>
    <property type="match status" value="1"/>
</dbReference>
<dbReference type="PROSITE" id="PS01311">
    <property type="entry name" value="LGT"/>
    <property type="match status" value="1"/>
</dbReference>
<accession>Q8KDG0</accession>
<protein>
    <recommendedName>
        <fullName evidence="1">Phosphatidylglycerol--prolipoprotein diacylglyceryl transferase</fullName>
        <ecNumber evidence="1">2.5.1.145</ecNumber>
    </recommendedName>
</protein>
<feature type="chain" id="PRO_0000172582" description="Phosphatidylglycerol--prolipoprotein diacylglyceryl transferase">
    <location>
        <begin position="1"/>
        <end position="289"/>
    </location>
</feature>
<feature type="transmembrane region" description="Helical" evidence="1">
    <location>
        <begin position="24"/>
        <end position="44"/>
    </location>
</feature>
<feature type="transmembrane region" description="Helical" evidence="1">
    <location>
        <begin position="70"/>
        <end position="90"/>
    </location>
</feature>
<feature type="transmembrane region" description="Helical" evidence="1">
    <location>
        <begin position="111"/>
        <end position="131"/>
    </location>
</feature>
<feature type="transmembrane region" description="Helical" evidence="1">
    <location>
        <begin position="219"/>
        <end position="239"/>
    </location>
</feature>
<feature type="transmembrane region" description="Helical" evidence="1">
    <location>
        <begin position="253"/>
        <end position="273"/>
    </location>
</feature>
<feature type="binding site" evidence="1">
    <location>
        <position position="158"/>
    </location>
    <ligand>
        <name>a 1,2-diacyl-sn-glycero-3-phospho-(1'-sn-glycerol)</name>
        <dbReference type="ChEBI" id="CHEBI:64716"/>
    </ligand>
</feature>
<gene>
    <name evidence="1" type="primary">lgt</name>
    <name type="ordered locus">CT1090</name>
</gene>
<proteinExistence type="inferred from homology"/>
<sequence>MIDFTTWWQHLPSQMNPVIFSIDGIAIRWYGTMYIVAFAIVYLLSKYRISNEKLPFDKTFPGDALTWAMGGVLIGGRIGYILFYGFDWFLQDPVGTLIPIKFGNGSCAFSGINGMSFHGGLIGVAIALWLFTRTHKVDFLKTVDLFIPALPLGYTFGRLGNFINGELYGRVTTSAIGMYFPAAPTVALRHPSQLYEAFFEGIVLFIILWTIRKKAPWPGYLSGLYLIGYGTVRFFIEFFREPDAQLGFVFLNFSMGQVLCFLMIAAGIGILVWSKQRAENADVMMGGKR</sequence>
<reference key="1">
    <citation type="journal article" date="2002" name="Proc. Natl. Acad. Sci. U.S.A.">
        <title>The complete genome sequence of Chlorobium tepidum TLS, a photosynthetic, anaerobic, green-sulfur bacterium.</title>
        <authorList>
            <person name="Eisen J.A."/>
            <person name="Nelson K.E."/>
            <person name="Paulsen I.T."/>
            <person name="Heidelberg J.F."/>
            <person name="Wu M."/>
            <person name="Dodson R.J."/>
            <person name="DeBoy R.T."/>
            <person name="Gwinn M.L."/>
            <person name="Nelson W.C."/>
            <person name="Haft D.H."/>
            <person name="Hickey E.K."/>
            <person name="Peterson J.D."/>
            <person name="Durkin A.S."/>
            <person name="Kolonay J.F."/>
            <person name="Yang F."/>
            <person name="Holt I.E."/>
            <person name="Umayam L.A."/>
            <person name="Mason T.M."/>
            <person name="Brenner M."/>
            <person name="Shea T.P."/>
            <person name="Parksey D.S."/>
            <person name="Nierman W.C."/>
            <person name="Feldblyum T.V."/>
            <person name="Hansen C.L."/>
            <person name="Craven M.B."/>
            <person name="Radune D."/>
            <person name="Vamathevan J.J."/>
            <person name="Khouri H.M."/>
            <person name="White O."/>
            <person name="Gruber T.M."/>
            <person name="Ketchum K.A."/>
            <person name="Venter J.C."/>
            <person name="Tettelin H."/>
            <person name="Bryant D.A."/>
            <person name="Fraser C.M."/>
        </authorList>
    </citation>
    <scope>NUCLEOTIDE SEQUENCE [LARGE SCALE GENOMIC DNA]</scope>
    <source>
        <strain>ATCC 49652 / DSM 12025 / NBRC 103806 / TLS</strain>
    </source>
</reference>
<evidence type="ECO:0000255" key="1">
    <source>
        <dbReference type="HAMAP-Rule" id="MF_01147"/>
    </source>
</evidence>
<organism>
    <name type="scientific">Chlorobaculum tepidum (strain ATCC 49652 / DSM 12025 / NBRC 103806 / TLS)</name>
    <name type="common">Chlorobium tepidum</name>
    <dbReference type="NCBI Taxonomy" id="194439"/>
    <lineage>
        <taxon>Bacteria</taxon>
        <taxon>Pseudomonadati</taxon>
        <taxon>Chlorobiota</taxon>
        <taxon>Chlorobiia</taxon>
        <taxon>Chlorobiales</taxon>
        <taxon>Chlorobiaceae</taxon>
        <taxon>Chlorobaculum</taxon>
    </lineage>
</organism>
<comment type="function">
    <text evidence="1">Catalyzes the transfer of the diacylglyceryl group from phosphatidylglycerol to the sulfhydryl group of the N-terminal cysteine of a prolipoprotein, the first step in the formation of mature lipoproteins.</text>
</comment>
<comment type="catalytic activity">
    <reaction evidence="1">
        <text>L-cysteinyl-[prolipoprotein] + a 1,2-diacyl-sn-glycero-3-phospho-(1'-sn-glycerol) = an S-1,2-diacyl-sn-glyceryl-L-cysteinyl-[prolipoprotein] + sn-glycerol 1-phosphate + H(+)</text>
        <dbReference type="Rhea" id="RHEA:56712"/>
        <dbReference type="Rhea" id="RHEA-COMP:14679"/>
        <dbReference type="Rhea" id="RHEA-COMP:14680"/>
        <dbReference type="ChEBI" id="CHEBI:15378"/>
        <dbReference type="ChEBI" id="CHEBI:29950"/>
        <dbReference type="ChEBI" id="CHEBI:57685"/>
        <dbReference type="ChEBI" id="CHEBI:64716"/>
        <dbReference type="ChEBI" id="CHEBI:140658"/>
        <dbReference type="EC" id="2.5.1.145"/>
    </reaction>
</comment>
<comment type="pathway">
    <text evidence="1">Protein modification; lipoprotein biosynthesis (diacylglyceryl transfer).</text>
</comment>
<comment type="subcellular location">
    <subcellularLocation>
        <location evidence="1">Cell inner membrane</location>
        <topology evidence="1">Multi-pass membrane protein</topology>
    </subcellularLocation>
</comment>
<comment type="similarity">
    <text evidence="1">Belongs to the Lgt family.</text>
</comment>
<name>LGT_CHLTE</name>
<keyword id="KW-0997">Cell inner membrane</keyword>
<keyword id="KW-1003">Cell membrane</keyword>
<keyword id="KW-0472">Membrane</keyword>
<keyword id="KW-1185">Reference proteome</keyword>
<keyword id="KW-0808">Transferase</keyword>
<keyword id="KW-0812">Transmembrane</keyword>
<keyword id="KW-1133">Transmembrane helix</keyword>